<organism>
    <name type="scientific">Chelonoidis niger</name>
    <name type="common">Galapagos giant tortoise</name>
    <name type="synonym">Geochelone nigra</name>
    <dbReference type="NCBI Taxonomy" id="66189"/>
    <lineage>
        <taxon>Eukaryota</taxon>
        <taxon>Metazoa</taxon>
        <taxon>Chordata</taxon>
        <taxon>Craniata</taxon>
        <taxon>Vertebrata</taxon>
        <taxon>Euteleostomi</taxon>
        <taxon>Archelosauria</taxon>
        <taxon>Testudinata</taxon>
        <taxon>Testudines</taxon>
        <taxon>Cryptodira</taxon>
        <taxon>Durocryptodira</taxon>
        <taxon>Testudinoidea</taxon>
        <taxon>Testudinidae</taxon>
        <taxon>Chelonoidis</taxon>
    </lineage>
</organism>
<feature type="initiator methionine" description="Removed" evidence="3">
    <location>
        <position position="1"/>
    </location>
</feature>
<feature type="chain" id="PRO_0000052963" description="Hemoglobin subunit beta">
    <location>
        <begin position="2"/>
        <end position="147"/>
    </location>
</feature>
<feature type="domain" description="Globin" evidence="2">
    <location>
        <begin position="3"/>
        <end position="147"/>
    </location>
</feature>
<feature type="binding site" description="distal binding residue">
    <location>
        <position position="64"/>
    </location>
    <ligand>
        <name>heme b</name>
        <dbReference type="ChEBI" id="CHEBI:60344"/>
    </ligand>
    <ligandPart>
        <name>Fe</name>
        <dbReference type="ChEBI" id="CHEBI:18248"/>
    </ligandPart>
</feature>
<feature type="binding site" description="proximal binding residue">
    <location>
        <position position="93"/>
    </location>
    <ligand>
        <name>heme b</name>
        <dbReference type="ChEBI" id="CHEBI:60344"/>
    </ligand>
    <ligandPart>
        <name>Fe</name>
        <dbReference type="ChEBI" id="CHEBI:18248"/>
    </ligandPart>
</feature>
<feature type="sequence conflict" description="In Ref. 1; AA sequence." evidence="4" ref="1">
    <original>P</original>
    <variation>S</variation>
    <location>
        <position position="6"/>
    </location>
</feature>
<feature type="sequence conflict" description="In Ref. 1; AA sequence." evidence="4" ref="1">
    <original>E</original>
    <variation>G</variation>
    <location>
        <position position="22"/>
    </location>
</feature>
<feature type="sequence conflict" description="In Ref. 1; AA sequence." evidence="4" ref="1">
    <original>S</original>
    <variation>A</variation>
    <location>
        <position position="44"/>
    </location>
</feature>
<feature type="sequence conflict" description="In Ref. 1; AA sequence." evidence="4" ref="1">
    <original>S</original>
    <variation>N</variation>
    <location>
        <position position="53"/>
    </location>
</feature>
<feature type="sequence conflict" description="In Ref. 1; AA sequence." evidence="4" ref="1">
    <original>K</original>
    <variation>Q</variation>
    <location>
        <position position="66"/>
    </location>
</feature>
<feature type="sequence conflict" description="In Ref. 1; AA sequence." evidence="4" ref="1">
    <original>D</original>
    <variation>E</variation>
    <location>
        <position position="74"/>
    </location>
</feature>
<feature type="sequence conflict" description="In Ref. 1; AA sequence." evidence="4" ref="1">
    <original>R</original>
    <variation>H</variation>
    <location>
        <position position="118"/>
    </location>
</feature>
<reference key="1">
    <citation type="journal article" date="2002" name="Zool. Sci.">
        <title>The primary structure of hemoglobin D from the Aldabra giant tortoise, Geochelone gigantea.</title>
        <authorList>
            <person name="Shishikura F."/>
        </authorList>
    </citation>
    <scope>NUCLEOTIDE SEQUENCE [GENOMIC DNA]</scope>
    <scope>PROTEIN SEQUENCE OF 2-147</scope>
    <source>
        <tissue>Erythrocyte</tissue>
    </source>
</reference>
<name>HBB_CHENI</name>
<gene>
    <name type="primary">HBB</name>
</gene>
<sequence>MVHWTPEEKQYITSLWAKVNVEEVGGEALARLLIVYPWTQRFFSSFGNLSSASAILHNAKVLAHGKKVLTSFGDAVKNLDNIKKTFAQLSELHCEKLHVDPENFKLLGNILIIVLATRFPKEFTPASQAAWTKLVNAVAHALALGYH</sequence>
<protein>
    <recommendedName>
        <fullName>Hemoglobin subunit beta</fullName>
    </recommendedName>
    <alternativeName>
        <fullName>Beta-globin</fullName>
    </alternativeName>
    <alternativeName>
        <fullName>Hemoglobin beta chain</fullName>
    </alternativeName>
</protein>
<accession>P83123</accession>
<accession>Q5CD78</accession>
<proteinExistence type="evidence at protein level"/>
<dbReference type="EMBL" id="AB116524">
    <property type="protein sequence ID" value="BAC81727.1"/>
    <property type="molecule type" value="Genomic_DNA"/>
</dbReference>
<dbReference type="SMR" id="P83123"/>
<dbReference type="GO" id="GO:0072562">
    <property type="term" value="C:blood microparticle"/>
    <property type="evidence" value="ECO:0007669"/>
    <property type="project" value="TreeGrafter"/>
</dbReference>
<dbReference type="GO" id="GO:0031838">
    <property type="term" value="C:haptoglobin-hemoglobin complex"/>
    <property type="evidence" value="ECO:0007669"/>
    <property type="project" value="TreeGrafter"/>
</dbReference>
<dbReference type="GO" id="GO:0005833">
    <property type="term" value="C:hemoglobin complex"/>
    <property type="evidence" value="ECO:0007669"/>
    <property type="project" value="InterPro"/>
</dbReference>
<dbReference type="GO" id="GO:0031720">
    <property type="term" value="F:haptoglobin binding"/>
    <property type="evidence" value="ECO:0007669"/>
    <property type="project" value="TreeGrafter"/>
</dbReference>
<dbReference type="GO" id="GO:0020037">
    <property type="term" value="F:heme binding"/>
    <property type="evidence" value="ECO:0007669"/>
    <property type="project" value="InterPro"/>
</dbReference>
<dbReference type="GO" id="GO:0046872">
    <property type="term" value="F:metal ion binding"/>
    <property type="evidence" value="ECO:0007669"/>
    <property type="project" value="UniProtKB-KW"/>
</dbReference>
<dbReference type="GO" id="GO:0043177">
    <property type="term" value="F:organic acid binding"/>
    <property type="evidence" value="ECO:0007669"/>
    <property type="project" value="TreeGrafter"/>
</dbReference>
<dbReference type="GO" id="GO:0019825">
    <property type="term" value="F:oxygen binding"/>
    <property type="evidence" value="ECO:0007669"/>
    <property type="project" value="InterPro"/>
</dbReference>
<dbReference type="GO" id="GO:0005344">
    <property type="term" value="F:oxygen carrier activity"/>
    <property type="evidence" value="ECO:0007669"/>
    <property type="project" value="UniProtKB-KW"/>
</dbReference>
<dbReference type="GO" id="GO:0004601">
    <property type="term" value="F:peroxidase activity"/>
    <property type="evidence" value="ECO:0007669"/>
    <property type="project" value="TreeGrafter"/>
</dbReference>
<dbReference type="GO" id="GO:0042744">
    <property type="term" value="P:hydrogen peroxide catabolic process"/>
    <property type="evidence" value="ECO:0007669"/>
    <property type="project" value="TreeGrafter"/>
</dbReference>
<dbReference type="CDD" id="cd08925">
    <property type="entry name" value="Hb-beta-like"/>
    <property type="match status" value="1"/>
</dbReference>
<dbReference type="FunFam" id="1.10.490.10:FF:000001">
    <property type="entry name" value="Hemoglobin subunit beta"/>
    <property type="match status" value="1"/>
</dbReference>
<dbReference type="Gene3D" id="1.10.490.10">
    <property type="entry name" value="Globins"/>
    <property type="match status" value="1"/>
</dbReference>
<dbReference type="InterPro" id="IPR000971">
    <property type="entry name" value="Globin"/>
</dbReference>
<dbReference type="InterPro" id="IPR009050">
    <property type="entry name" value="Globin-like_sf"/>
</dbReference>
<dbReference type="InterPro" id="IPR012292">
    <property type="entry name" value="Globin/Proto"/>
</dbReference>
<dbReference type="InterPro" id="IPR002337">
    <property type="entry name" value="Hemoglobin_b"/>
</dbReference>
<dbReference type="InterPro" id="IPR050056">
    <property type="entry name" value="Hemoglobin_oxygen_transport"/>
</dbReference>
<dbReference type="PANTHER" id="PTHR11442">
    <property type="entry name" value="HEMOGLOBIN FAMILY MEMBER"/>
    <property type="match status" value="1"/>
</dbReference>
<dbReference type="PANTHER" id="PTHR11442:SF7">
    <property type="entry name" value="HEMOGLOBIN SUBUNIT EPSILON"/>
    <property type="match status" value="1"/>
</dbReference>
<dbReference type="Pfam" id="PF00042">
    <property type="entry name" value="Globin"/>
    <property type="match status" value="1"/>
</dbReference>
<dbReference type="PRINTS" id="PR00814">
    <property type="entry name" value="BETAHAEM"/>
</dbReference>
<dbReference type="SUPFAM" id="SSF46458">
    <property type="entry name" value="Globin-like"/>
    <property type="match status" value="1"/>
</dbReference>
<dbReference type="PROSITE" id="PS01033">
    <property type="entry name" value="GLOBIN"/>
    <property type="match status" value="1"/>
</dbReference>
<keyword id="KW-0903">Direct protein sequencing</keyword>
<keyword id="KW-0349">Heme</keyword>
<keyword id="KW-0408">Iron</keyword>
<keyword id="KW-0479">Metal-binding</keyword>
<keyword id="KW-0561">Oxygen transport</keyword>
<keyword id="KW-0813">Transport</keyword>
<evidence type="ECO:0000250" key="1"/>
<evidence type="ECO:0000255" key="2">
    <source>
        <dbReference type="PROSITE-ProRule" id="PRU00238"/>
    </source>
</evidence>
<evidence type="ECO:0000269" key="3">
    <source>
    </source>
</evidence>
<evidence type="ECO:0000305" key="4"/>
<comment type="function">
    <text>Involved in oxygen transport from the lung to the various peripheral tissues.</text>
</comment>
<comment type="subunit">
    <text evidence="1">Heterotetramer of two alpha-D chains and two beta chains.</text>
</comment>
<comment type="tissue specificity">
    <text>Red blood cells.</text>
</comment>
<comment type="similarity">
    <text evidence="2">Belongs to the globin family.</text>
</comment>